<dbReference type="EC" id="2.8.1.8" evidence="1"/>
<dbReference type="EMBL" id="CP000386">
    <property type="protein sequence ID" value="ABG05465.1"/>
    <property type="molecule type" value="Genomic_DNA"/>
</dbReference>
<dbReference type="RefSeq" id="WP_011565474.1">
    <property type="nucleotide sequence ID" value="NC_008148.1"/>
</dbReference>
<dbReference type="SMR" id="Q1AT13"/>
<dbReference type="STRING" id="266117.Rxyl_2548"/>
<dbReference type="KEGG" id="rxy:Rxyl_2548"/>
<dbReference type="eggNOG" id="COG0320">
    <property type="taxonomic scope" value="Bacteria"/>
</dbReference>
<dbReference type="HOGENOM" id="CLU_033144_2_1_11"/>
<dbReference type="OrthoDB" id="9787898at2"/>
<dbReference type="PhylomeDB" id="Q1AT13"/>
<dbReference type="UniPathway" id="UPA00538">
    <property type="reaction ID" value="UER00593"/>
</dbReference>
<dbReference type="Proteomes" id="UP000006637">
    <property type="component" value="Chromosome"/>
</dbReference>
<dbReference type="GO" id="GO:0005737">
    <property type="term" value="C:cytoplasm"/>
    <property type="evidence" value="ECO:0007669"/>
    <property type="project" value="UniProtKB-SubCell"/>
</dbReference>
<dbReference type="GO" id="GO:0051539">
    <property type="term" value="F:4 iron, 4 sulfur cluster binding"/>
    <property type="evidence" value="ECO:0007669"/>
    <property type="project" value="UniProtKB-UniRule"/>
</dbReference>
<dbReference type="GO" id="GO:0016992">
    <property type="term" value="F:lipoate synthase activity"/>
    <property type="evidence" value="ECO:0007669"/>
    <property type="project" value="UniProtKB-UniRule"/>
</dbReference>
<dbReference type="GO" id="GO:0046872">
    <property type="term" value="F:metal ion binding"/>
    <property type="evidence" value="ECO:0007669"/>
    <property type="project" value="UniProtKB-KW"/>
</dbReference>
<dbReference type="CDD" id="cd01335">
    <property type="entry name" value="Radical_SAM"/>
    <property type="match status" value="1"/>
</dbReference>
<dbReference type="FunFam" id="3.20.20.70:FF:000040">
    <property type="entry name" value="Lipoyl synthase"/>
    <property type="match status" value="1"/>
</dbReference>
<dbReference type="Gene3D" id="3.20.20.70">
    <property type="entry name" value="Aldolase class I"/>
    <property type="match status" value="1"/>
</dbReference>
<dbReference type="HAMAP" id="MF_00206">
    <property type="entry name" value="Lipoyl_synth"/>
    <property type="match status" value="1"/>
</dbReference>
<dbReference type="InterPro" id="IPR013785">
    <property type="entry name" value="Aldolase_TIM"/>
</dbReference>
<dbReference type="InterPro" id="IPR006638">
    <property type="entry name" value="Elp3/MiaA/NifB-like_rSAM"/>
</dbReference>
<dbReference type="InterPro" id="IPR031691">
    <property type="entry name" value="LIAS_N"/>
</dbReference>
<dbReference type="InterPro" id="IPR003698">
    <property type="entry name" value="Lipoyl_synth"/>
</dbReference>
<dbReference type="InterPro" id="IPR007197">
    <property type="entry name" value="rSAM"/>
</dbReference>
<dbReference type="NCBIfam" id="TIGR00510">
    <property type="entry name" value="lipA"/>
    <property type="match status" value="1"/>
</dbReference>
<dbReference type="NCBIfam" id="NF004019">
    <property type="entry name" value="PRK05481.1"/>
    <property type="match status" value="1"/>
</dbReference>
<dbReference type="NCBIfam" id="NF009544">
    <property type="entry name" value="PRK12928.1"/>
    <property type="match status" value="1"/>
</dbReference>
<dbReference type="PANTHER" id="PTHR10949">
    <property type="entry name" value="LIPOYL SYNTHASE"/>
    <property type="match status" value="1"/>
</dbReference>
<dbReference type="PANTHER" id="PTHR10949:SF0">
    <property type="entry name" value="LIPOYL SYNTHASE, MITOCHONDRIAL"/>
    <property type="match status" value="1"/>
</dbReference>
<dbReference type="Pfam" id="PF16881">
    <property type="entry name" value="LIAS_N"/>
    <property type="match status" value="1"/>
</dbReference>
<dbReference type="Pfam" id="PF04055">
    <property type="entry name" value="Radical_SAM"/>
    <property type="match status" value="1"/>
</dbReference>
<dbReference type="PIRSF" id="PIRSF005963">
    <property type="entry name" value="Lipoyl_synth"/>
    <property type="match status" value="1"/>
</dbReference>
<dbReference type="SFLD" id="SFLDF00271">
    <property type="entry name" value="lipoyl_synthase"/>
    <property type="match status" value="1"/>
</dbReference>
<dbReference type="SFLD" id="SFLDG01058">
    <property type="entry name" value="lipoyl_synthase_like"/>
    <property type="match status" value="1"/>
</dbReference>
<dbReference type="SMART" id="SM00729">
    <property type="entry name" value="Elp3"/>
    <property type="match status" value="1"/>
</dbReference>
<dbReference type="SUPFAM" id="SSF102114">
    <property type="entry name" value="Radical SAM enzymes"/>
    <property type="match status" value="1"/>
</dbReference>
<dbReference type="PROSITE" id="PS51918">
    <property type="entry name" value="RADICAL_SAM"/>
    <property type="match status" value="1"/>
</dbReference>
<name>LIPA_RUBXD</name>
<keyword id="KW-0004">4Fe-4S</keyword>
<keyword id="KW-0963">Cytoplasm</keyword>
<keyword id="KW-0408">Iron</keyword>
<keyword id="KW-0411">Iron-sulfur</keyword>
<keyword id="KW-0479">Metal-binding</keyword>
<keyword id="KW-1185">Reference proteome</keyword>
<keyword id="KW-0949">S-adenosyl-L-methionine</keyword>
<keyword id="KW-0808">Transferase</keyword>
<feature type="chain" id="PRO_0000325306" description="Lipoyl synthase">
    <location>
        <begin position="1"/>
        <end position="321"/>
    </location>
</feature>
<feature type="domain" description="Radical SAM core" evidence="2">
    <location>
        <begin position="75"/>
        <end position="291"/>
    </location>
</feature>
<feature type="region of interest" description="Disordered" evidence="3">
    <location>
        <begin position="1"/>
        <end position="21"/>
    </location>
</feature>
<feature type="region of interest" description="Disordered" evidence="3">
    <location>
        <begin position="301"/>
        <end position="321"/>
    </location>
</feature>
<feature type="compositionally biased region" description="Basic and acidic residues" evidence="3">
    <location>
        <begin position="304"/>
        <end position="314"/>
    </location>
</feature>
<feature type="binding site" evidence="1">
    <location>
        <position position="63"/>
    </location>
    <ligand>
        <name>[4Fe-4S] cluster</name>
        <dbReference type="ChEBI" id="CHEBI:49883"/>
        <label>1</label>
    </ligand>
</feature>
<feature type="binding site" evidence="1">
    <location>
        <position position="68"/>
    </location>
    <ligand>
        <name>[4Fe-4S] cluster</name>
        <dbReference type="ChEBI" id="CHEBI:49883"/>
        <label>1</label>
    </ligand>
</feature>
<feature type="binding site" evidence="1">
    <location>
        <position position="74"/>
    </location>
    <ligand>
        <name>[4Fe-4S] cluster</name>
        <dbReference type="ChEBI" id="CHEBI:49883"/>
        <label>1</label>
    </ligand>
</feature>
<feature type="binding site" evidence="1">
    <location>
        <position position="89"/>
    </location>
    <ligand>
        <name>[4Fe-4S] cluster</name>
        <dbReference type="ChEBI" id="CHEBI:49883"/>
        <label>2</label>
        <note>4Fe-4S-S-AdoMet</note>
    </ligand>
</feature>
<feature type="binding site" evidence="1">
    <location>
        <position position="93"/>
    </location>
    <ligand>
        <name>[4Fe-4S] cluster</name>
        <dbReference type="ChEBI" id="CHEBI:49883"/>
        <label>2</label>
        <note>4Fe-4S-S-AdoMet</note>
    </ligand>
</feature>
<feature type="binding site" evidence="1">
    <location>
        <position position="96"/>
    </location>
    <ligand>
        <name>[4Fe-4S] cluster</name>
        <dbReference type="ChEBI" id="CHEBI:49883"/>
        <label>2</label>
        <note>4Fe-4S-S-AdoMet</note>
    </ligand>
</feature>
<feature type="binding site" evidence="1">
    <location>
        <position position="302"/>
    </location>
    <ligand>
        <name>[4Fe-4S] cluster</name>
        <dbReference type="ChEBI" id="CHEBI:49883"/>
        <label>1</label>
    </ligand>
</feature>
<proteinExistence type="inferred from homology"/>
<evidence type="ECO:0000255" key="1">
    <source>
        <dbReference type="HAMAP-Rule" id="MF_00206"/>
    </source>
</evidence>
<evidence type="ECO:0000255" key="2">
    <source>
        <dbReference type="PROSITE-ProRule" id="PRU01266"/>
    </source>
</evidence>
<evidence type="ECO:0000256" key="3">
    <source>
        <dbReference type="SAM" id="MobiDB-lite"/>
    </source>
</evidence>
<organism>
    <name type="scientific">Rubrobacter xylanophilus (strain DSM 9941 / JCM 11954 / NBRC 16129 / PRD-1)</name>
    <dbReference type="NCBI Taxonomy" id="266117"/>
    <lineage>
        <taxon>Bacteria</taxon>
        <taxon>Bacillati</taxon>
        <taxon>Actinomycetota</taxon>
        <taxon>Rubrobacteria</taxon>
        <taxon>Rubrobacterales</taxon>
        <taxon>Rubrobacteraceae</taxon>
        <taxon>Rubrobacter</taxon>
    </lineage>
</organism>
<protein>
    <recommendedName>
        <fullName evidence="1">Lipoyl synthase</fullName>
        <ecNumber evidence="1">2.8.1.8</ecNumber>
    </recommendedName>
    <alternativeName>
        <fullName evidence="1">Lip-syn</fullName>
        <shortName evidence="1">LS</shortName>
    </alternativeName>
    <alternativeName>
        <fullName evidence="1">Lipoate synthase</fullName>
    </alternativeName>
    <alternativeName>
        <fullName evidence="1">Lipoic acid synthase</fullName>
    </alternativeName>
    <alternativeName>
        <fullName evidence="1">Sulfur insertion protein LipA</fullName>
    </alternativeName>
</protein>
<accession>Q1AT13</accession>
<sequence length="321" mass="36215">MRHRWEDRPVAPPPDGRPTEYLPFRQERGRHGRPGWLKARVPDGPGYREIKETMRGLSLHTVCEEARCPNIGECWNNRTATFMILGNVCTRSCGFCAVLTGRPQELDLEEPYRVADAVKKMGLRHAVITSVNRDELPDGGASVFAATIRAIRREVPGCAVEVLTPDFKGDRDAIKTVIDARPDTFNHNIETVPRLYPAVRPQAKYGRSLEVLRYAKELDPGVLTKSGFMVGLGEVEEEIVRTMRDLREHGVDILTIGQYLRPTENHLPMARYYTPQEFARYKKLGLEMGFSHVESGPLVRSSYHAHEQTEDARRGALGARG</sequence>
<comment type="function">
    <text evidence="1">Catalyzes the radical-mediated insertion of two sulfur atoms into the C-6 and C-8 positions of the octanoyl moiety bound to the lipoyl domains of lipoate-dependent enzymes, thereby converting the octanoylated domains into lipoylated derivatives.</text>
</comment>
<comment type="catalytic activity">
    <reaction evidence="1">
        <text>[[Fe-S] cluster scaffold protein carrying a second [4Fe-4S](2+) cluster] + N(6)-octanoyl-L-lysyl-[protein] + 2 oxidized [2Fe-2S]-[ferredoxin] + 2 S-adenosyl-L-methionine + 4 H(+) = [[Fe-S] cluster scaffold protein] + N(6)-[(R)-dihydrolipoyl]-L-lysyl-[protein] + 4 Fe(3+) + 2 hydrogen sulfide + 2 5'-deoxyadenosine + 2 L-methionine + 2 reduced [2Fe-2S]-[ferredoxin]</text>
        <dbReference type="Rhea" id="RHEA:16585"/>
        <dbReference type="Rhea" id="RHEA-COMP:9928"/>
        <dbReference type="Rhea" id="RHEA-COMP:10000"/>
        <dbReference type="Rhea" id="RHEA-COMP:10001"/>
        <dbReference type="Rhea" id="RHEA-COMP:10475"/>
        <dbReference type="Rhea" id="RHEA-COMP:14568"/>
        <dbReference type="Rhea" id="RHEA-COMP:14569"/>
        <dbReference type="ChEBI" id="CHEBI:15378"/>
        <dbReference type="ChEBI" id="CHEBI:17319"/>
        <dbReference type="ChEBI" id="CHEBI:29034"/>
        <dbReference type="ChEBI" id="CHEBI:29919"/>
        <dbReference type="ChEBI" id="CHEBI:33722"/>
        <dbReference type="ChEBI" id="CHEBI:33737"/>
        <dbReference type="ChEBI" id="CHEBI:33738"/>
        <dbReference type="ChEBI" id="CHEBI:57844"/>
        <dbReference type="ChEBI" id="CHEBI:59789"/>
        <dbReference type="ChEBI" id="CHEBI:78809"/>
        <dbReference type="ChEBI" id="CHEBI:83100"/>
        <dbReference type="EC" id="2.8.1.8"/>
    </reaction>
</comment>
<comment type="cofactor">
    <cofactor evidence="1">
        <name>[4Fe-4S] cluster</name>
        <dbReference type="ChEBI" id="CHEBI:49883"/>
    </cofactor>
    <text evidence="1">Binds 2 [4Fe-4S] clusters per subunit. One cluster is coordinated with 3 cysteines and an exchangeable S-adenosyl-L-methionine.</text>
</comment>
<comment type="pathway">
    <text evidence="1">Protein modification; protein lipoylation via endogenous pathway; protein N(6)-(lipoyl)lysine from octanoyl-[acyl-carrier-protein]: step 2/2.</text>
</comment>
<comment type="subcellular location">
    <subcellularLocation>
        <location evidence="1">Cytoplasm</location>
    </subcellularLocation>
</comment>
<comment type="similarity">
    <text evidence="1">Belongs to the radical SAM superfamily. Lipoyl synthase family.</text>
</comment>
<reference key="1">
    <citation type="submission" date="2006-06" db="EMBL/GenBank/DDBJ databases">
        <title>Complete sequence of Rubrobacter xylanophilus DSM 9941.</title>
        <authorList>
            <consortium name="US DOE Joint Genome Institute"/>
            <person name="Copeland A."/>
            <person name="Lucas S."/>
            <person name="Lapidus A."/>
            <person name="Barry K."/>
            <person name="Detter J.C."/>
            <person name="Glavina del Rio T."/>
            <person name="Hammon N."/>
            <person name="Israni S."/>
            <person name="Dalin E."/>
            <person name="Tice H."/>
            <person name="Pitluck S."/>
            <person name="Munk A.C."/>
            <person name="Brettin T."/>
            <person name="Bruce D."/>
            <person name="Han C."/>
            <person name="Tapia R."/>
            <person name="Gilna P."/>
            <person name="Schmutz J."/>
            <person name="Larimer F."/>
            <person name="Land M."/>
            <person name="Hauser L."/>
            <person name="Kyrpides N."/>
            <person name="Lykidis A."/>
            <person name="da Costa M.S."/>
            <person name="Rainey F.A."/>
            <person name="Empadinhas N."/>
            <person name="Jolivet E."/>
            <person name="Battista J.R."/>
            <person name="Richardson P."/>
        </authorList>
    </citation>
    <scope>NUCLEOTIDE SEQUENCE [LARGE SCALE GENOMIC DNA]</scope>
    <source>
        <strain>DSM 9941 / JCM 11954 / NBRC 16129 / PRD-1</strain>
    </source>
</reference>
<gene>
    <name evidence="1" type="primary">lipA</name>
    <name type="ordered locus">Rxyl_2548</name>
</gene>